<dbReference type="EC" id="4.2.1.17"/>
<dbReference type="EMBL" id="AE000516">
    <property type="protein sequence ID" value="AAK45783.1"/>
    <property type="molecule type" value="Genomic_DNA"/>
</dbReference>
<dbReference type="PIR" id="C70873">
    <property type="entry name" value="C70873"/>
</dbReference>
<dbReference type="RefSeq" id="WP_003898888.1">
    <property type="nucleotide sequence ID" value="NZ_KK341227.1"/>
</dbReference>
<dbReference type="SMR" id="P9WNN6"/>
<dbReference type="KEGG" id="mtc:MT1518"/>
<dbReference type="PATRIC" id="fig|83331.31.peg.1633"/>
<dbReference type="HOGENOM" id="CLU_009834_7_2_11"/>
<dbReference type="Proteomes" id="UP000001020">
    <property type="component" value="Chromosome"/>
</dbReference>
<dbReference type="GO" id="GO:0004300">
    <property type="term" value="F:enoyl-CoA hydratase activity"/>
    <property type="evidence" value="ECO:0007669"/>
    <property type="project" value="UniProtKB-EC"/>
</dbReference>
<dbReference type="GO" id="GO:0006631">
    <property type="term" value="P:fatty acid metabolic process"/>
    <property type="evidence" value="ECO:0007669"/>
    <property type="project" value="UniProtKB-KW"/>
</dbReference>
<dbReference type="CDD" id="cd06558">
    <property type="entry name" value="crotonase-like"/>
    <property type="match status" value="1"/>
</dbReference>
<dbReference type="FunFam" id="3.90.226.10:FF:000078">
    <property type="entry name" value="Enoyl-CoA hydratase EchA12"/>
    <property type="match status" value="1"/>
</dbReference>
<dbReference type="Gene3D" id="3.90.226.10">
    <property type="entry name" value="2-enoyl-CoA Hydratase, Chain A, domain 1"/>
    <property type="match status" value="1"/>
</dbReference>
<dbReference type="Gene3D" id="1.10.12.10">
    <property type="entry name" value="Lyase 2-enoyl-coa Hydratase, Chain A, domain 2"/>
    <property type="match status" value="1"/>
</dbReference>
<dbReference type="InterPro" id="IPR029045">
    <property type="entry name" value="ClpP/crotonase-like_dom_sf"/>
</dbReference>
<dbReference type="InterPro" id="IPR018376">
    <property type="entry name" value="Enoyl-CoA_hyd/isom_CS"/>
</dbReference>
<dbReference type="InterPro" id="IPR001753">
    <property type="entry name" value="Enoyl-CoA_hydra/iso"/>
</dbReference>
<dbReference type="InterPro" id="IPR014748">
    <property type="entry name" value="Enoyl-CoA_hydra_C"/>
</dbReference>
<dbReference type="NCBIfam" id="NF004519">
    <property type="entry name" value="PRK05864.1"/>
    <property type="match status" value="1"/>
</dbReference>
<dbReference type="PANTHER" id="PTHR43802">
    <property type="entry name" value="ENOYL-COA HYDRATASE"/>
    <property type="match status" value="1"/>
</dbReference>
<dbReference type="PANTHER" id="PTHR43802:SF1">
    <property type="entry name" value="IP11341P-RELATED"/>
    <property type="match status" value="1"/>
</dbReference>
<dbReference type="Pfam" id="PF00378">
    <property type="entry name" value="ECH_1"/>
    <property type="match status" value="1"/>
</dbReference>
<dbReference type="SUPFAM" id="SSF52096">
    <property type="entry name" value="ClpP/crotonase"/>
    <property type="match status" value="1"/>
</dbReference>
<dbReference type="PROSITE" id="PS00166">
    <property type="entry name" value="ENOYL_COA_HYDRATASE"/>
    <property type="match status" value="1"/>
</dbReference>
<keyword id="KW-0276">Fatty acid metabolism</keyword>
<keyword id="KW-0443">Lipid metabolism</keyword>
<keyword id="KW-0456">Lyase</keyword>
<keyword id="KW-1185">Reference proteome</keyword>
<organism>
    <name type="scientific">Mycobacterium tuberculosis (strain CDC 1551 / Oshkosh)</name>
    <dbReference type="NCBI Taxonomy" id="83331"/>
    <lineage>
        <taxon>Bacteria</taxon>
        <taxon>Bacillati</taxon>
        <taxon>Actinomycetota</taxon>
        <taxon>Actinomycetes</taxon>
        <taxon>Mycobacteriales</taxon>
        <taxon>Mycobacteriaceae</taxon>
        <taxon>Mycobacterium</taxon>
        <taxon>Mycobacterium tuberculosis complex</taxon>
    </lineage>
</organism>
<name>ECH12_MYCTO</name>
<sequence>MPHRCAAQVVAGYRSTVSLVLVEHPRPEIAQITLNRPERMNSMAFDVMVPLKEALAQVSYDNSVRVVVLTGAGRGFSPGADHKSAGVVPHVENLTRPTYALRSMELLDDVILMLRRLHQPVIAAVNGPAIGGGLCLALAADIRVASSSAYFRAAGINNGLTASELGLSYLLPRAIGSSRAFEIMLTGRDVSAEEAERIGLVSRQVPDEQLLDACYAIAARMAGFSRPGIELTKRTLWSGLDAASLEAHMQAEGLGQLFVRLLTANFEEAVAARAEQRAPVFTDDT</sequence>
<proteinExistence type="inferred from homology"/>
<protein>
    <recommendedName>
        <fullName>Probable enoyl-CoA hydratase echA12</fullName>
        <ecNumber>4.2.1.17</ecNumber>
    </recommendedName>
</protein>
<comment type="function">
    <text evidence="1">Could possibly oxidize fatty acids using specific components.</text>
</comment>
<comment type="catalytic activity">
    <reaction>
        <text>a (3S)-3-hydroxyacyl-CoA = a (2E)-enoyl-CoA + H2O</text>
        <dbReference type="Rhea" id="RHEA:16105"/>
        <dbReference type="ChEBI" id="CHEBI:15377"/>
        <dbReference type="ChEBI" id="CHEBI:57318"/>
        <dbReference type="ChEBI" id="CHEBI:58856"/>
        <dbReference type="EC" id="4.2.1.17"/>
    </reaction>
</comment>
<comment type="catalytic activity">
    <reaction>
        <text>a 4-saturated-(3S)-3-hydroxyacyl-CoA = a (3E)-enoyl-CoA + H2O</text>
        <dbReference type="Rhea" id="RHEA:20724"/>
        <dbReference type="ChEBI" id="CHEBI:15377"/>
        <dbReference type="ChEBI" id="CHEBI:58521"/>
        <dbReference type="ChEBI" id="CHEBI:137480"/>
        <dbReference type="EC" id="4.2.1.17"/>
    </reaction>
</comment>
<comment type="similarity">
    <text evidence="2">Belongs to the enoyl-CoA hydratase/isomerase family.</text>
</comment>
<feature type="chain" id="PRO_0000427095" description="Probable enoyl-CoA hydratase echA12">
    <location>
        <begin position="1"/>
        <end position="285"/>
    </location>
</feature>
<gene>
    <name type="primary">echA12</name>
    <name type="synonym">fadB2</name>
    <name type="ordered locus">MT1518</name>
</gene>
<evidence type="ECO:0000250" key="1"/>
<evidence type="ECO:0000305" key="2"/>
<accession>P9WNN6</accession>
<accession>L0T6R6</accession>
<accession>O53163</accession>
<reference key="1">
    <citation type="journal article" date="2002" name="J. Bacteriol.">
        <title>Whole-genome comparison of Mycobacterium tuberculosis clinical and laboratory strains.</title>
        <authorList>
            <person name="Fleischmann R.D."/>
            <person name="Alland D."/>
            <person name="Eisen J.A."/>
            <person name="Carpenter L."/>
            <person name="White O."/>
            <person name="Peterson J.D."/>
            <person name="DeBoy R.T."/>
            <person name="Dodson R.J."/>
            <person name="Gwinn M.L."/>
            <person name="Haft D.H."/>
            <person name="Hickey E.K."/>
            <person name="Kolonay J.F."/>
            <person name="Nelson W.C."/>
            <person name="Umayam L.A."/>
            <person name="Ermolaeva M.D."/>
            <person name="Salzberg S.L."/>
            <person name="Delcher A."/>
            <person name="Utterback T.R."/>
            <person name="Weidman J.F."/>
            <person name="Khouri H.M."/>
            <person name="Gill J."/>
            <person name="Mikula A."/>
            <person name="Bishai W."/>
            <person name="Jacobs W.R. Jr."/>
            <person name="Venter J.C."/>
            <person name="Fraser C.M."/>
        </authorList>
    </citation>
    <scope>NUCLEOTIDE SEQUENCE [LARGE SCALE GENOMIC DNA]</scope>
    <source>
        <strain>CDC 1551 / Oshkosh</strain>
    </source>
</reference>